<evidence type="ECO:0000255" key="1">
    <source>
        <dbReference type="HAMAP-Rule" id="MF_00368"/>
    </source>
</evidence>
<evidence type="ECO:0000305" key="2"/>
<keyword id="KW-0687">Ribonucleoprotein</keyword>
<keyword id="KW-0689">Ribosomal protein</keyword>
<comment type="function">
    <text evidence="1">Forms part of the ribosomal stalk which helps the ribosome interact with GTP-bound translation factors. Is thus essential for accurate translation.</text>
</comment>
<comment type="subunit">
    <text evidence="1">Homodimer. Part of the ribosomal stalk of the 50S ribosomal subunit. Forms a multimeric L10(L12)X complex, where L10 forms an elongated spine to which 2 to 4 L12 dimers bind in a sequential fashion. Binds GTP-bound translation factors.</text>
</comment>
<comment type="similarity">
    <text evidence="1">Belongs to the bacterial ribosomal protein bL12 family.</text>
</comment>
<proteinExistence type="inferred from homology"/>
<name>RL7_PROM5</name>
<gene>
    <name evidence="1" type="primary">rplL</name>
    <name evidence="1" type="synonym">rpl12</name>
    <name type="ordered locus">P9515_02301</name>
</gene>
<reference key="1">
    <citation type="journal article" date="2007" name="PLoS Genet.">
        <title>Patterns and implications of gene gain and loss in the evolution of Prochlorococcus.</title>
        <authorList>
            <person name="Kettler G.C."/>
            <person name="Martiny A.C."/>
            <person name="Huang K."/>
            <person name="Zucker J."/>
            <person name="Coleman M.L."/>
            <person name="Rodrigue S."/>
            <person name="Chen F."/>
            <person name="Lapidus A."/>
            <person name="Ferriera S."/>
            <person name="Johnson J."/>
            <person name="Steglich C."/>
            <person name="Church G.M."/>
            <person name="Richardson P."/>
            <person name="Chisholm S.W."/>
        </authorList>
    </citation>
    <scope>NUCLEOTIDE SEQUENCE [LARGE SCALE GENOMIC DNA]</scope>
    <source>
        <strain>MIT 9515</strain>
    </source>
</reference>
<protein>
    <recommendedName>
        <fullName evidence="1">Large ribosomal subunit protein bL12</fullName>
    </recommendedName>
    <alternativeName>
        <fullName evidence="2">50S ribosomal protein L7/L12</fullName>
    </alternativeName>
</protein>
<organism>
    <name type="scientific">Prochlorococcus marinus (strain MIT 9515)</name>
    <dbReference type="NCBI Taxonomy" id="167542"/>
    <lineage>
        <taxon>Bacteria</taxon>
        <taxon>Bacillati</taxon>
        <taxon>Cyanobacteriota</taxon>
        <taxon>Cyanophyceae</taxon>
        <taxon>Synechococcales</taxon>
        <taxon>Prochlorococcaceae</taxon>
        <taxon>Prochlorococcus</taxon>
    </lineage>
</organism>
<accession>A2BUH8</accession>
<feature type="chain" id="PRO_1000007058" description="Large ribosomal subunit protein bL12">
    <location>
        <begin position="1"/>
        <end position="131"/>
    </location>
</feature>
<dbReference type="EMBL" id="CP000552">
    <property type="protein sequence ID" value="ABM71439.1"/>
    <property type="molecule type" value="Genomic_DNA"/>
</dbReference>
<dbReference type="RefSeq" id="WP_011819553.1">
    <property type="nucleotide sequence ID" value="NC_008817.1"/>
</dbReference>
<dbReference type="SMR" id="A2BUH8"/>
<dbReference type="STRING" id="167542.P9515_02301"/>
<dbReference type="GeneID" id="60200984"/>
<dbReference type="KEGG" id="pmc:P9515_02301"/>
<dbReference type="eggNOG" id="COG0222">
    <property type="taxonomic scope" value="Bacteria"/>
</dbReference>
<dbReference type="HOGENOM" id="CLU_086499_3_0_3"/>
<dbReference type="OrthoDB" id="9811748at2"/>
<dbReference type="Proteomes" id="UP000001589">
    <property type="component" value="Chromosome"/>
</dbReference>
<dbReference type="GO" id="GO:0022625">
    <property type="term" value="C:cytosolic large ribosomal subunit"/>
    <property type="evidence" value="ECO:0007669"/>
    <property type="project" value="TreeGrafter"/>
</dbReference>
<dbReference type="GO" id="GO:0003729">
    <property type="term" value="F:mRNA binding"/>
    <property type="evidence" value="ECO:0007669"/>
    <property type="project" value="TreeGrafter"/>
</dbReference>
<dbReference type="GO" id="GO:0003735">
    <property type="term" value="F:structural constituent of ribosome"/>
    <property type="evidence" value="ECO:0007669"/>
    <property type="project" value="InterPro"/>
</dbReference>
<dbReference type="GO" id="GO:0006412">
    <property type="term" value="P:translation"/>
    <property type="evidence" value="ECO:0007669"/>
    <property type="project" value="UniProtKB-UniRule"/>
</dbReference>
<dbReference type="CDD" id="cd00387">
    <property type="entry name" value="Ribosomal_L7_L12"/>
    <property type="match status" value="1"/>
</dbReference>
<dbReference type="FunFam" id="3.30.1390.10:FF:000001">
    <property type="entry name" value="50S ribosomal protein L7/L12"/>
    <property type="match status" value="1"/>
</dbReference>
<dbReference type="Gene3D" id="3.30.1390.10">
    <property type="match status" value="1"/>
</dbReference>
<dbReference type="Gene3D" id="1.20.5.710">
    <property type="entry name" value="Single helix bin"/>
    <property type="match status" value="1"/>
</dbReference>
<dbReference type="HAMAP" id="MF_00368">
    <property type="entry name" value="Ribosomal_bL12"/>
    <property type="match status" value="1"/>
</dbReference>
<dbReference type="InterPro" id="IPR000206">
    <property type="entry name" value="Ribosomal_bL12"/>
</dbReference>
<dbReference type="InterPro" id="IPR013823">
    <property type="entry name" value="Ribosomal_bL12_C"/>
</dbReference>
<dbReference type="InterPro" id="IPR014719">
    <property type="entry name" value="Ribosomal_bL12_C/ClpS-like"/>
</dbReference>
<dbReference type="InterPro" id="IPR008932">
    <property type="entry name" value="Ribosomal_bL12_oligo"/>
</dbReference>
<dbReference type="InterPro" id="IPR036235">
    <property type="entry name" value="Ribosomal_bL12_oligo_N_sf"/>
</dbReference>
<dbReference type="NCBIfam" id="TIGR00855">
    <property type="entry name" value="L12"/>
    <property type="match status" value="1"/>
</dbReference>
<dbReference type="PANTHER" id="PTHR45987">
    <property type="entry name" value="39S RIBOSOMAL PROTEIN L12"/>
    <property type="match status" value="1"/>
</dbReference>
<dbReference type="PANTHER" id="PTHR45987:SF4">
    <property type="entry name" value="LARGE RIBOSOMAL SUBUNIT PROTEIN BL12M"/>
    <property type="match status" value="1"/>
</dbReference>
<dbReference type="Pfam" id="PF00542">
    <property type="entry name" value="Ribosomal_L12"/>
    <property type="match status" value="1"/>
</dbReference>
<dbReference type="Pfam" id="PF16320">
    <property type="entry name" value="Ribosomal_L12_N"/>
    <property type="match status" value="1"/>
</dbReference>
<dbReference type="SUPFAM" id="SSF54736">
    <property type="entry name" value="ClpS-like"/>
    <property type="match status" value="1"/>
</dbReference>
<dbReference type="SUPFAM" id="SSF48300">
    <property type="entry name" value="Ribosomal protein L7/12, oligomerisation (N-terminal) domain"/>
    <property type="match status" value="1"/>
</dbReference>
<sequence>MTAKTEEILESLKSLSLLEASELVKQIEEAFGVSAAASAGVVMAAPGAAGGDGDGGAAEEKTEFDVILESFDAAAKIKVLKVVRNATGLGLGDAKALVESAPKTVKEGIAKADAETLKKEIEEAGGKVTLK</sequence>